<accession>Q10041</accession>
<organism>
    <name type="scientific">Caenorhabditis elegans</name>
    <dbReference type="NCBI Taxonomy" id="6239"/>
    <lineage>
        <taxon>Eukaryota</taxon>
        <taxon>Metazoa</taxon>
        <taxon>Ecdysozoa</taxon>
        <taxon>Nematoda</taxon>
        <taxon>Chromadorea</taxon>
        <taxon>Rhabditida</taxon>
        <taxon>Rhabditina</taxon>
        <taxon>Rhabditomorpha</taxon>
        <taxon>Rhabditoidea</taxon>
        <taxon>Rhabditidae</taxon>
        <taxon>Peloderinae</taxon>
        <taxon>Caenorhabditis</taxon>
    </lineage>
</organism>
<sequence>MGACSSCLRLLLDAESDVKIHVIEPTSINNGEGSSVVHRDATAPPTPPVVPTSTLQVPGLQRARTPEPNDPRVANL</sequence>
<keyword id="KW-1185">Reference proteome</keyword>
<feature type="chain" id="PRO_0000065390" description="Uncharacterized protein K01A12.2">
    <location>
        <begin position="1"/>
        <end position="76"/>
    </location>
</feature>
<feature type="region of interest" description="Disordered" evidence="1">
    <location>
        <begin position="27"/>
        <end position="76"/>
    </location>
</feature>
<gene>
    <name type="ORF">K01A12.2</name>
</gene>
<protein>
    <recommendedName>
        <fullName>Uncharacterized protein K01A12.2</fullName>
    </recommendedName>
</protein>
<reference key="1">
    <citation type="journal article" date="1998" name="Science">
        <title>Genome sequence of the nematode C. elegans: a platform for investigating biology.</title>
        <authorList>
            <consortium name="The C. elegans sequencing consortium"/>
        </authorList>
    </citation>
    <scope>NUCLEOTIDE SEQUENCE [LARGE SCALE GENOMIC DNA]</scope>
    <source>
        <strain>Bristol N2</strain>
    </source>
</reference>
<proteinExistence type="predicted"/>
<dbReference type="EMBL" id="FO081128">
    <property type="protein sequence ID" value="CCD69328.1"/>
    <property type="molecule type" value="Genomic_DNA"/>
</dbReference>
<dbReference type="PIR" id="T16512">
    <property type="entry name" value="T16512"/>
</dbReference>
<dbReference type="RefSeq" id="NP_509461.3">
    <property type="nucleotide sequence ID" value="NM_077060.6"/>
</dbReference>
<dbReference type="FunCoup" id="Q10041">
    <property type="interactions" value="61"/>
</dbReference>
<dbReference type="PaxDb" id="6239-K01A12.2"/>
<dbReference type="EnsemblMetazoa" id="K01A12.2.1">
    <property type="protein sequence ID" value="K01A12.2.1"/>
    <property type="gene ID" value="WBGene00019286"/>
</dbReference>
<dbReference type="EnsemblMetazoa" id="K01A12.2.2">
    <property type="protein sequence ID" value="K01A12.2.2"/>
    <property type="gene ID" value="WBGene00019286"/>
</dbReference>
<dbReference type="GeneID" id="186831"/>
<dbReference type="KEGG" id="cel:CELE_K01A12.2"/>
<dbReference type="UCSC" id="K01A12.2">
    <property type="organism name" value="c. elegans"/>
</dbReference>
<dbReference type="AGR" id="WB:WBGene00019286"/>
<dbReference type="CTD" id="186831"/>
<dbReference type="WormBase" id="K01A12.2">
    <property type="protein sequence ID" value="CE46106"/>
    <property type="gene ID" value="WBGene00019286"/>
</dbReference>
<dbReference type="eggNOG" id="ENOG502TIMJ">
    <property type="taxonomic scope" value="Eukaryota"/>
</dbReference>
<dbReference type="HOGENOM" id="CLU_2673345_0_0_1"/>
<dbReference type="InParanoid" id="Q10041"/>
<dbReference type="OMA" id="HRTRNHE"/>
<dbReference type="OrthoDB" id="5867354at2759"/>
<dbReference type="PRO" id="PR:Q10041"/>
<dbReference type="Proteomes" id="UP000001940">
    <property type="component" value="Chromosome X"/>
</dbReference>
<dbReference type="Bgee" id="WBGene00019286">
    <property type="expression patterns" value="Expressed in larva and 3 other cell types or tissues"/>
</dbReference>
<evidence type="ECO:0000256" key="1">
    <source>
        <dbReference type="SAM" id="MobiDB-lite"/>
    </source>
</evidence>
<name>YRC2_CAEEL</name>